<protein>
    <recommendedName>
        <fullName evidence="5">Mu-elapitoxin-Na1a</fullName>
        <shortName evidence="3">Mu-EPTX-Na1a</shortName>
    </recommendedName>
</protein>
<accession>P0DUK7</accession>
<evidence type="ECO:0000250" key="1">
    <source>
        <dbReference type="UniProtKB" id="P62375"/>
    </source>
</evidence>
<evidence type="ECO:0000269" key="2">
    <source>
    </source>
</evidence>
<evidence type="ECO:0000303" key="3">
    <source>
    </source>
</evidence>
<evidence type="ECO:0000305" key="4"/>
<evidence type="ECO:0000305" key="5">
    <source>
    </source>
</evidence>
<feature type="chain" id="PRO_0000452710" description="Mu-elapitoxin-Na1a" evidence="1">
    <location>
        <begin position="1"/>
        <end position="62"/>
    </location>
</feature>
<feature type="disulfide bond" evidence="1">
    <location>
        <begin position="3"/>
        <end position="22"/>
    </location>
</feature>
<feature type="disulfide bond" evidence="1">
    <location>
        <begin position="15"/>
        <end position="40"/>
    </location>
</feature>
<feature type="disulfide bond" evidence="1">
    <location>
        <begin position="44"/>
        <end position="55"/>
    </location>
</feature>
<feature type="disulfide bond" evidence="1">
    <location>
        <begin position="56"/>
        <end position="61"/>
    </location>
</feature>
<proteinExistence type="evidence at protein level"/>
<organism>
    <name type="scientific">Naja atra</name>
    <name type="common">Chinese cobra</name>
    <dbReference type="NCBI Taxonomy" id="8656"/>
    <lineage>
        <taxon>Eukaryota</taxon>
        <taxon>Metazoa</taxon>
        <taxon>Chordata</taxon>
        <taxon>Craniata</taxon>
        <taxon>Vertebrata</taxon>
        <taxon>Euteleostomi</taxon>
        <taxon>Lepidosauria</taxon>
        <taxon>Squamata</taxon>
        <taxon>Bifurcata</taxon>
        <taxon>Unidentata</taxon>
        <taxon>Episquamata</taxon>
        <taxon>Toxicofera</taxon>
        <taxon>Serpentes</taxon>
        <taxon>Colubroidea</taxon>
        <taxon>Elapidae</taxon>
        <taxon>Elapinae</taxon>
        <taxon>Naja</taxon>
    </lineage>
</organism>
<name>3SOF1_NAJAT</name>
<comment type="function">
    <text evidence="2">Potent inhibitor of human Nav1.8/SCN10A (IC(50)=141-380 nM) (PubMed:30804211). Is highly selective for this channel and acts in a reversible manner (PubMed:30804211). Shows a depolarizing shift of activation and hyperpolarizing shift of inactivation (PubMed:30804211). In contrast to the very similar cytotoxin A5 (AC P62375), does not seem to bind integrin alpha-V/beta-3, since it does not promote or inhibit the proliferation of HUVECs and C-PAE cells (PubMed:30804211). In vivo, in rodent models of inflammatory and neuropathic pain, it alleviates nociceptive behaviors more potently than does morphine (PubMed:30804211). It displays no evident cytotoxic, hemolytic and cardiotoxic activities and produces no obvious adverse responses in mice even at a dose 30-fold higher than that producing a significant analgesic effect (PubMed:30804211).</text>
</comment>
<comment type="subcellular location">
    <subcellularLocation>
        <location evidence="2">Secreted</location>
    </subcellularLocation>
</comment>
<comment type="tissue specificity">
    <text evidence="5">Expressed by the venom gland.</text>
</comment>
<comment type="mass spectrometry"/>
<comment type="miscellaneous">
    <text evidence="1">Is classified as a P-type cytotoxin, since a proline residue stands at position 52 (Pro-31 in standard classification).</text>
</comment>
<comment type="miscellaneous">
    <text evidence="2">Negative results: Shows no or very weak inhibition of rat Nav1.1/SCN1A, human Nav1.2/SCN2A, human Nav1.3/SCN3A, human Nav1.4/SCN4A (IC(50)&gt;10 uM), human Nav1.5/SCN5A (IC(50)=8.51 uM), human Nav1.6/SCN8A, human Nav1.7/SCN9A, and Nav1.9/SCN11A (PubMed:30804211). Has no effect on transient receptor potential cation channels TRPV1, TRPV2, TRPV3, TRPV4, TRPA1, TRPM8, TRPC3, TRPC4, TRPC5, and TRPC6 (PubMed:30804211).</text>
</comment>
<comment type="similarity">
    <text evidence="4">Belongs to the three-finger toxin family. Short-chain subfamily. Orphan group XV sub-subfamily.</text>
</comment>
<keyword id="KW-0903">Direct protein sequencing</keyword>
<keyword id="KW-1015">Disulfide bond</keyword>
<keyword id="KW-0872">Ion channel impairing toxin</keyword>
<keyword id="KW-0528">Neurotoxin</keyword>
<keyword id="KW-0964">Secreted</keyword>
<keyword id="KW-0800">Toxin</keyword>
<keyword id="KW-0738">Voltage-gated sodium channel impairing toxin</keyword>
<dbReference type="SMR" id="P0DUK7"/>
<dbReference type="GO" id="GO:0005576">
    <property type="term" value="C:extracellular region"/>
    <property type="evidence" value="ECO:0007669"/>
    <property type="project" value="UniProtKB-SubCell"/>
</dbReference>
<dbReference type="GO" id="GO:0017080">
    <property type="term" value="F:sodium channel regulator activity"/>
    <property type="evidence" value="ECO:0007669"/>
    <property type="project" value="UniProtKB-KW"/>
</dbReference>
<dbReference type="GO" id="GO:0090729">
    <property type="term" value="F:toxin activity"/>
    <property type="evidence" value="ECO:0007669"/>
    <property type="project" value="UniProtKB-KW"/>
</dbReference>
<dbReference type="CDD" id="cd00206">
    <property type="entry name" value="TFP_snake_toxin"/>
    <property type="match status" value="1"/>
</dbReference>
<dbReference type="FunFam" id="2.10.60.10:FF:000024">
    <property type="entry name" value="Cytotoxin 1"/>
    <property type="match status" value="1"/>
</dbReference>
<dbReference type="Gene3D" id="2.10.60.10">
    <property type="entry name" value="CD59"/>
    <property type="match status" value="1"/>
</dbReference>
<dbReference type="InterPro" id="IPR003572">
    <property type="entry name" value="Cytotoxin_Cobra"/>
</dbReference>
<dbReference type="InterPro" id="IPR003571">
    <property type="entry name" value="Snake_3FTx"/>
</dbReference>
<dbReference type="InterPro" id="IPR045860">
    <property type="entry name" value="Snake_toxin-like_sf"/>
</dbReference>
<dbReference type="InterPro" id="IPR018354">
    <property type="entry name" value="Snake_toxin_con_site"/>
</dbReference>
<dbReference type="InterPro" id="IPR054131">
    <property type="entry name" value="Toxin_cobra-type"/>
</dbReference>
<dbReference type="Pfam" id="PF21947">
    <property type="entry name" value="Toxin_cobra-type"/>
    <property type="match status" value="1"/>
</dbReference>
<dbReference type="PRINTS" id="PR00282">
    <property type="entry name" value="CYTOTOXIN"/>
</dbReference>
<dbReference type="SUPFAM" id="SSF57302">
    <property type="entry name" value="Snake toxin-like"/>
    <property type="match status" value="1"/>
</dbReference>
<dbReference type="PROSITE" id="PS00272">
    <property type="entry name" value="SNAKE_TOXIN"/>
    <property type="match status" value="1"/>
</dbReference>
<reference key="1">
    <citation type="journal article" date="2019" name="J. Biol. Chem.">
        <title>Naja atra venom peptide reduces pain by selectively blocking the voltage-gated sodium channel Nav1.8.</title>
        <authorList>
            <person name="Zhang F."/>
            <person name="Zhang C."/>
            <person name="Xu X."/>
            <person name="Zhang Y."/>
            <person name="Gong X."/>
            <person name="Yang Z."/>
            <person name="Zhang H."/>
            <person name="Tang D."/>
            <person name="Liang S."/>
            <person name="Liu Z."/>
        </authorList>
    </citation>
    <scope>PROTEIN SEQUENCE</scope>
    <scope>FUNCTION</scope>
    <scope>MASS SPECTROMETRY</scope>
    <scope>3D-STRUCTURE MODELING</scope>
    <source>
        <tissue>Venom</tissue>
    </source>
</reference>
<sequence>LKCHNTQLPFIYKTCPEGKNLCFKATLKKFPLKFPFKRGCADNCPKNSALLKYVCCSTDKCN</sequence>